<sequence>MTKEKPSSTRVAKTQALDDLIMGTNSSSIVSKRSVERLYYPNELHFFRYFVNKFQRRAPLINRGYWLRLRAIDVIVRQFITTPEPGRRKVVINLGAGSDVLPWQSYHRYGDSCGDTLFIDVDYPDLMRKKRAIVLGTPQLSELLGEDPYVSEKETDHLLLRSDKYCQVGCDLRELETLRKCLESFLPLFECSVLFVAEVSVTYMDTISADALIQWASYIGQAEFCLLEQILPHGPDHPFASTMLKHFNKLNTSLKSVHQYPTVNSQRSRFEKRGWNSVDVWDLWEAWNSEVFLNSSERAALDDVEPFDEWEEFILFARHYIVLHATSYHRGGKGAGQQMLASPPGKHVKANMVATKSLGAPKRRFGSPLVASSPEGGQYLVHTLGMGINARLDSCDIYSIQESSTSLEMAPVGPSARICHTTTDLGQGDLLLVGGRASPSKAFSDCWVLKKSSNSWEKTFDLPVPLFRHSTVNLPGSSLALVLGGKTGPSEISSDYFIFHPVRGWLKCAVSGVSPNSTFGAFAIASTSLGSKNGHFEGLLAGGIDGEGKINNQAYFWTVDVTTHEPIIHFESVQNYDQHSWALSVFGAQTANIESLSFVCGGVGQDPSSQGQSMACLTVKGKSLAVHLVDLGEKAGQLPFMVGSATVSSGSQLVIVGGGATCFSMGTFWDTGVYKIDLEGVVSEMIPGRTIHNKPVVVGYQNSPKLTQPTTDGVYPGPQSNAFITAIPKIKLQSKSDFEKLVQNRKPVIIEGLDLGGCVEKWNSEYVIQSVGETKEVVVHECQTSTGKMDFNSKNFRYVTESFSSFMTKAARGEALYLRALSEEKPTEAPANLAEDFPGLADDFRLPEELGSVKDRMFSSVLRISGRANMWLHYDVMANVYTQIQGSKRMVLFPPTDVSHLAFAPGASSSSLDIFSALDTHQLASTNPHEAFLNPGDLLFIPAMWFHTASPVTDLSVAVNVFFRDLESGYSTGRDVYGNRDLAAYEKGRQDISRITKSFDRLPSEIRQFYLRRLADELLHE</sequence>
<gene>
    <name type="primary">PPM2</name>
    <name type="synonym">TYW4</name>
    <name type="ORF">FGRAMPH1_01T14951</name>
    <name type="ORF">FGRRES_04298</name>
    <name type="ORF">FGSG_04298</name>
</gene>
<protein>
    <recommendedName>
        <fullName>tRNA wybutosine-synthesizing protein 4</fullName>
        <shortName>tRNA-yW synthesizing protein 4</shortName>
        <ecNumber>2.1.1.290</ecNumber>
        <ecNumber>2.3.1.231</ecNumber>
    </recommendedName>
    <alternativeName>
        <fullName>Leucine carboxyl methyltransferase 2</fullName>
    </alternativeName>
    <alternativeName>
        <fullName>tRNA(Phe) (7-(3-amino-3-(methoxycarbonyl)propyl)wyosine(37)-N)-methoxycarbonyltransferase</fullName>
    </alternativeName>
    <alternativeName>
        <fullName>tRNA(Phe) (7-(3-amino-3-carboxypropyl)wyosine(37)-O)-methyltransferase</fullName>
    </alternativeName>
</protein>
<accession>Q4IER0</accession>
<accession>A0A098DLG7</accession>
<accession>A0A0E0S702</accession>
<accession>A0A1C3YN67</accession>
<accession>V6R3K6</accession>
<name>TYW4_GIBZE</name>
<keyword id="KW-0489">Methyltransferase</keyword>
<keyword id="KW-1185">Reference proteome</keyword>
<keyword id="KW-0949">S-adenosyl-L-methionine</keyword>
<keyword id="KW-0808">Transferase</keyword>
<keyword id="KW-0819">tRNA processing</keyword>
<dbReference type="EC" id="2.1.1.290"/>
<dbReference type="EC" id="2.3.1.231"/>
<dbReference type="EMBL" id="DS231664">
    <property type="protein sequence ID" value="ESU08819.1"/>
    <property type="molecule type" value="Genomic_DNA"/>
</dbReference>
<dbReference type="EMBL" id="HG970333">
    <property type="protein sequence ID" value="SCB65939.1"/>
    <property type="molecule type" value="Genomic_DNA"/>
</dbReference>
<dbReference type="RefSeq" id="XP_011321318.1">
    <property type="nucleotide sequence ID" value="XM_011323016.1"/>
</dbReference>
<dbReference type="SMR" id="Q4IER0"/>
<dbReference type="FunCoup" id="Q4IER0">
    <property type="interactions" value="100"/>
</dbReference>
<dbReference type="STRING" id="229533.Q4IER0"/>
<dbReference type="GeneID" id="23551556"/>
<dbReference type="KEGG" id="fgr:FGSG_04298"/>
<dbReference type="VEuPathDB" id="FungiDB:FGRAMPH1_01G14951"/>
<dbReference type="eggNOG" id="KOG2132">
    <property type="taxonomic scope" value="Eukaryota"/>
</dbReference>
<dbReference type="eggNOG" id="KOG2918">
    <property type="taxonomic scope" value="Eukaryota"/>
</dbReference>
<dbReference type="HOGENOM" id="CLU_002761_1_0_1"/>
<dbReference type="InParanoid" id="Q4IER0"/>
<dbReference type="OrthoDB" id="24820at110618"/>
<dbReference type="UniPathway" id="UPA00375"/>
<dbReference type="Proteomes" id="UP000070720">
    <property type="component" value="Chromosome 2"/>
</dbReference>
<dbReference type="GO" id="GO:0008175">
    <property type="term" value="F:tRNA methyltransferase activity"/>
    <property type="evidence" value="ECO:0007669"/>
    <property type="project" value="TreeGrafter"/>
</dbReference>
<dbReference type="GO" id="GO:0030488">
    <property type="term" value="P:tRNA methylation"/>
    <property type="evidence" value="ECO:0007669"/>
    <property type="project" value="TreeGrafter"/>
</dbReference>
<dbReference type="GO" id="GO:0031591">
    <property type="term" value="P:wybutosine biosynthetic process"/>
    <property type="evidence" value="ECO:0007669"/>
    <property type="project" value="TreeGrafter"/>
</dbReference>
<dbReference type="FunFam" id="2.60.120.650:FF:000043">
    <property type="entry name" value="tRNA wybutosine-synthesizing protein 4"/>
    <property type="match status" value="1"/>
</dbReference>
<dbReference type="Gene3D" id="6.10.140.1470">
    <property type="match status" value="1"/>
</dbReference>
<dbReference type="Gene3D" id="2.60.120.650">
    <property type="entry name" value="Cupin"/>
    <property type="match status" value="1"/>
</dbReference>
<dbReference type="Gene3D" id="2.120.10.80">
    <property type="entry name" value="Kelch-type beta propeller"/>
    <property type="match status" value="1"/>
</dbReference>
<dbReference type="Gene3D" id="3.40.50.150">
    <property type="entry name" value="Vaccinia Virus protein VP39"/>
    <property type="match status" value="1"/>
</dbReference>
<dbReference type="InterPro" id="IPR041667">
    <property type="entry name" value="Cupin_8"/>
</dbReference>
<dbReference type="InterPro" id="IPR003347">
    <property type="entry name" value="JmjC_dom"/>
</dbReference>
<dbReference type="InterPro" id="IPR015915">
    <property type="entry name" value="Kelch-typ_b-propeller"/>
</dbReference>
<dbReference type="InterPro" id="IPR007213">
    <property type="entry name" value="Ppm1/Ppm2/Tcmp"/>
</dbReference>
<dbReference type="InterPro" id="IPR029063">
    <property type="entry name" value="SAM-dependent_MTases_sf"/>
</dbReference>
<dbReference type="PANTHER" id="PTHR46529">
    <property type="entry name" value="TRNA WYBUTOSINE-SYNTHESIZING PROTEIN 4"/>
    <property type="match status" value="1"/>
</dbReference>
<dbReference type="PANTHER" id="PTHR46529:SF1">
    <property type="entry name" value="TRNA WYBUTOSINE-SYNTHESIZING PROTEIN 4"/>
    <property type="match status" value="1"/>
</dbReference>
<dbReference type="Pfam" id="PF13621">
    <property type="entry name" value="Cupin_8"/>
    <property type="match status" value="1"/>
</dbReference>
<dbReference type="Pfam" id="PF13418">
    <property type="entry name" value="Kelch_4"/>
    <property type="match status" value="1"/>
</dbReference>
<dbReference type="Pfam" id="PF04072">
    <property type="entry name" value="LCM"/>
    <property type="match status" value="1"/>
</dbReference>
<dbReference type="SMART" id="SM00558">
    <property type="entry name" value="JmjC"/>
    <property type="match status" value="1"/>
</dbReference>
<dbReference type="SUPFAM" id="SSF51197">
    <property type="entry name" value="Clavaminate synthase-like"/>
    <property type="match status" value="1"/>
</dbReference>
<dbReference type="SUPFAM" id="SSF117281">
    <property type="entry name" value="Kelch motif"/>
    <property type="match status" value="1"/>
</dbReference>
<dbReference type="SUPFAM" id="SSF53335">
    <property type="entry name" value="S-adenosyl-L-methionine-dependent methyltransferases"/>
    <property type="match status" value="1"/>
</dbReference>
<dbReference type="PROSITE" id="PS51184">
    <property type="entry name" value="JMJC"/>
    <property type="match status" value="1"/>
</dbReference>
<organism>
    <name type="scientific">Gibberella zeae (strain ATCC MYA-4620 / CBS 123657 / FGSC 9075 / NRRL 31084 / PH-1)</name>
    <name type="common">Wheat head blight fungus</name>
    <name type="synonym">Fusarium graminearum</name>
    <dbReference type="NCBI Taxonomy" id="229533"/>
    <lineage>
        <taxon>Eukaryota</taxon>
        <taxon>Fungi</taxon>
        <taxon>Dikarya</taxon>
        <taxon>Ascomycota</taxon>
        <taxon>Pezizomycotina</taxon>
        <taxon>Sordariomycetes</taxon>
        <taxon>Hypocreomycetidae</taxon>
        <taxon>Hypocreales</taxon>
        <taxon>Nectriaceae</taxon>
        <taxon>Fusarium</taxon>
    </lineage>
</organism>
<evidence type="ECO:0000250" key="1"/>
<evidence type="ECO:0000255" key="2">
    <source>
        <dbReference type="PROSITE-ProRule" id="PRU00538"/>
    </source>
</evidence>
<evidence type="ECO:0000305" key="3"/>
<reference key="1">
    <citation type="journal article" date="2007" name="Science">
        <title>The Fusarium graminearum genome reveals a link between localized polymorphism and pathogen specialization.</title>
        <authorList>
            <person name="Cuomo C.A."/>
            <person name="Gueldener U."/>
            <person name="Xu J.-R."/>
            <person name="Trail F."/>
            <person name="Turgeon B.G."/>
            <person name="Di Pietro A."/>
            <person name="Walton J.D."/>
            <person name="Ma L.-J."/>
            <person name="Baker S.E."/>
            <person name="Rep M."/>
            <person name="Adam G."/>
            <person name="Antoniw J."/>
            <person name="Baldwin T."/>
            <person name="Calvo S.E."/>
            <person name="Chang Y.-L."/>
            <person name="DeCaprio D."/>
            <person name="Gale L.R."/>
            <person name="Gnerre S."/>
            <person name="Goswami R.S."/>
            <person name="Hammond-Kosack K."/>
            <person name="Harris L.J."/>
            <person name="Hilburn K."/>
            <person name="Kennell J.C."/>
            <person name="Kroken S."/>
            <person name="Magnuson J.K."/>
            <person name="Mannhaupt G."/>
            <person name="Mauceli E.W."/>
            <person name="Mewes H.-W."/>
            <person name="Mitterbauer R."/>
            <person name="Muehlbauer G."/>
            <person name="Muensterkoetter M."/>
            <person name="Nelson D."/>
            <person name="O'Donnell K."/>
            <person name="Ouellet T."/>
            <person name="Qi W."/>
            <person name="Quesneville H."/>
            <person name="Roncero M.I.G."/>
            <person name="Seong K.-Y."/>
            <person name="Tetko I.V."/>
            <person name="Urban M."/>
            <person name="Waalwijk C."/>
            <person name="Ward T.J."/>
            <person name="Yao J."/>
            <person name="Birren B.W."/>
            <person name="Kistler H.C."/>
        </authorList>
    </citation>
    <scope>NUCLEOTIDE SEQUENCE [LARGE SCALE GENOMIC DNA]</scope>
    <source>
        <strain>ATCC MYA-4620 / CBS 123657 / FGSC 9075 / NRRL 31084 / PH-1</strain>
    </source>
</reference>
<reference key="2">
    <citation type="journal article" date="2010" name="Nature">
        <title>Comparative genomics reveals mobile pathogenicity chromosomes in Fusarium.</title>
        <authorList>
            <person name="Ma L.-J."/>
            <person name="van der Does H.C."/>
            <person name="Borkovich K.A."/>
            <person name="Coleman J.J."/>
            <person name="Daboussi M.-J."/>
            <person name="Di Pietro A."/>
            <person name="Dufresne M."/>
            <person name="Freitag M."/>
            <person name="Grabherr M."/>
            <person name="Henrissat B."/>
            <person name="Houterman P.M."/>
            <person name="Kang S."/>
            <person name="Shim W.-B."/>
            <person name="Woloshuk C."/>
            <person name="Xie X."/>
            <person name="Xu J.-R."/>
            <person name="Antoniw J."/>
            <person name="Baker S.E."/>
            <person name="Bluhm B.H."/>
            <person name="Breakspear A."/>
            <person name="Brown D.W."/>
            <person name="Butchko R.A.E."/>
            <person name="Chapman S."/>
            <person name="Coulson R."/>
            <person name="Coutinho P.M."/>
            <person name="Danchin E.G.J."/>
            <person name="Diener A."/>
            <person name="Gale L.R."/>
            <person name="Gardiner D.M."/>
            <person name="Goff S."/>
            <person name="Hammond-Kosack K.E."/>
            <person name="Hilburn K."/>
            <person name="Hua-Van A."/>
            <person name="Jonkers W."/>
            <person name="Kazan K."/>
            <person name="Kodira C.D."/>
            <person name="Koehrsen M."/>
            <person name="Kumar L."/>
            <person name="Lee Y.-H."/>
            <person name="Li L."/>
            <person name="Manners J.M."/>
            <person name="Miranda-Saavedra D."/>
            <person name="Mukherjee M."/>
            <person name="Park G."/>
            <person name="Park J."/>
            <person name="Park S.-Y."/>
            <person name="Proctor R.H."/>
            <person name="Regev A."/>
            <person name="Ruiz-Roldan M.C."/>
            <person name="Sain D."/>
            <person name="Sakthikumar S."/>
            <person name="Sykes S."/>
            <person name="Schwartz D.C."/>
            <person name="Turgeon B.G."/>
            <person name="Wapinski I."/>
            <person name="Yoder O."/>
            <person name="Young S."/>
            <person name="Zeng Q."/>
            <person name="Zhou S."/>
            <person name="Galagan J."/>
            <person name="Cuomo C.A."/>
            <person name="Kistler H.C."/>
            <person name="Rep M."/>
        </authorList>
    </citation>
    <scope>GENOME REANNOTATION</scope>
    <source>
        <strain>ATCC MYA-4620 / CBS 123657 / FGSC 9075 / NRRL 31084 / PH-1</strain>
    </source>
</reference>
<reference key="3">
    <citation type="journal article" date="2015" name="BMC Genomics">
        <title>The completed genome sequence of the pathogenic ascomycete fungus Fusarium graminearum.</title>
        <authorList>
            <person name="King R."/>
            <person name="Urban M."/>
            <person name="Hammond-Kosack M.C.U."/>
            <person name="Hassani-Pak K."/>
            <person name="Hammond-Kosack K.E."/>
        </authorList>
    </citation>
    <scope>NUCLEOTIDE SEQUENCE [LARGE SCALE GENOMIC DNA]</scope>
    <source>
        <strain>ATCC MYA-4620 / CBS 123657 / FGSC 9075 / NRRL 31084 / PH-1</strain>
    </source>
</reference>
<comment type="function">
    <text evidence="1">Probable S-adenosyl-L-methionine-dependent methyltransferase that acts as a component of the wybutosine biosynthesis pathway. Wybutosine is a hyper modified guanosine with a tricyclic base found at the 3'-position adjacent to the anticodon of eukaryotic phenylalanine tRNA. May methylate the carboxyl group of leucine residues to form alpha-leucine ester residues (By similarity).</text>
</comment>
<comment type="catalytic activity">
    <reaction>
        <text>7-[(3S)-3-amino-3-carboxypropyl]wyosine(37) in tRNA(Phe) + S-adenosyl-L-methionine = 7-[(3S)-(3-amino-3-methoxycarbonyl)propyl]wyosine(37) in tRNA(Phe) + S-adenosyl-L-homocysteine</text>
        <dbReference type="Rhea" id="RHEA:36903"/>
        <dbReference type="Rhea" id="RHEA-COMP:10379"/>
        <dbReference type="Rhea" id="RHEA-COMP:11844"/>
        <dbReference type="ChEBI" id="CHEBI:57856"/>
        <dbReference type="ChEBI" id="CHEBI:59789"/>
        <dbReference type="ChEBI" id="CHEBI:73543"/>
        <dbReference type="ChEBI" id="CHEBI:74275"/>
        <dbReference type="EC" id="2.1.1.290"/>
    </reaction>
</comment>
<comment type="catalytic activity">
    <reaction>
        <text>7-[(3S)-(3-amino-3-methoxycarbonyl)propyl]wyosine(37) in tRNA(Phe) + S-adenosyl-L-methionine + CO2 = wybutosine(37) in tRNA(Phe) + S-adenosyl-L-homocysteine + 2 H(+)</text>
        <dbReference type="Rhea" id="RHEA:37119"/>
        <dbReference type="Rhea" id="RHEA-COMP:11844"/>
        <dbReference type="Rhea" id="RHEA-COMP:11847"/>
        <dbReference type="ChEBI" id="CHEBI:15378"/>
        <dbReference type="ChEBI" id="CHEBI:16526"/>
        <dbReference type="ChEBI" id="CHEBI:57856"/>
        <dbReference type="ChEBI" id="CHEBI:59789"/>
        <dbReference type="ChEBI" id="CHEBI:73544"/>
        <dbReference type="ChEBI" id="CHEBI:74275"/>
        <dbReference type="EC" id="2.3.1.231"/>
    </reaction>
</comment>
<comment type="pathway">
    <text>tRNA modification; wybutosine-tRNA(Phe) biosynthesis.</text>
</comment>
<comment type="similarity">
    <text evidence="3">Belongs to the methyltransferase superfamily. LCMT family.</text>
</comment>
<proteinExistence type="inferred from homology"/>
<feature type="chain" id="PRO_0000226142" description="tRNA wybutosine-synthesizing protein 4">
    <location>
        <begin position="1"/>
        <end position="1021"/>
    </location>
</feature>
<feature type="domain" description="JmjC" evidence="2">
    <location>
        <begin position="826"/>
        <end position="980"/>
    </location>
</feature>
<feature type="binding site" evidence="1">
    <location>
        <position position="68"/>
    </location>
    <ligand>
        <name>S-adenosyl-L-methionine</name>
        <dbReference type="ChEBI" id="CHEBI:59789"/>
    </ligand>
</feature>
<feature type="binding site" evidence="1">
    <location>
        <position position="122"/>
    </location>
    <ligand>
        <name>S-adenosyl-L-methionine</name>
        <dbReference type="ChEBI" id="CHEBI:59789"/>
    </ligand>
</feature>
<feature type="binding site" evidence="1">
    <location>
        <begin position="171"/>
        <end position="172"/>
    </location>
    <ligand>
        <name>S-adenosyl-L-methionine</name>
        <dbReference type="ChEBI" id="CHEBI:59789"/>
    </ligand>
</feature>
<feature type="binding site" evidence="1">
    <location>
        <position position="198"/>
    </location>
    <ligand>
        <name>S-adenosyl-L-methionine</name>
        <dbReference type="ChEBI" id="CHEBI:59789"/>
    </ligand>
</feature>